<feature type="chain" id="PRO_0000092279" description="Sulfate/thiosulfate import ATP-binding protein CysA">
    <location>
        <begin position="1"/>
        <end position="362"/>
    </location>
</feature>
<feature type="domain" description="ABC transporter" evidence="1">
    <location>
        <begin position="3"/>
        <end position="237"/>
    </location>
</feature>
<feature type="binding site" evidence="1">
    <location>
        <begin position="35"/>
        <end position="42"/>
    </location>
    <ligand>
        <name>ATP</name>
        <dbReference type="ChEBI" id="CHEBI:30616"/>
    </ligand>
</feature>
<reference key="1">
    <citation type="journal article" date="2003" name="J. Bacteriol.">
        <title>Complete genome sequence of the ammonia-oxidizing bacterium and obligate chemolithoautotroph Nitrosomonas europaea.</title>
        <authorList>
            <person name="Chain P."/>
            <person name="Lamerdin J.E."/>
            <person name="Larimer F.W."/>
            <person name="Regala W."/>
            <person name="Lao V."/>
            <person name="Land M.L."/>
            <person name="Hauser L."/>
            <person name="Hooper A.B."/>
            <person name="Klotz M.G."/>
            <person name="Norton J."/>
            <person name="Sayavedra-Soto L.A."/>
            <person name="Arciero D.M."/>
            <person name="Hommes N.G."/>
            <person name="Whittaker M.M."/>
            <person name="Arp D.J."/>
        </authorList>
    </citation>
    <scope>NUCLEOTIDE SEQUENCE [LARGE SCALE GENOMIC DNA]</scope>
    <source>
        <strain>ATCC 19718 / CIP 103999 / KCTC 2705 / NBRC 14298</strain>
    </source>
</reference>
<proteinExistence type="inferred from homology"/>
<name>CYSA_NITEU</name>
<sequence>MTIEIHDLSKQFGSFTALNDINLKVNPGELLALLGPSGSGKTTLLRVIAGLETADSGQVLFNEEDSTDKHIRDRHVGFVFQHYALFRNMTIFENVAFGLRVRPRKQRPNAPEINHRVTELLQLVQLDWLADRYPHQLSGGQRQRIALARALAVEPSVLLLDEPFGALDAKVRKELRAWLRKLHDDMHITSVFVTHDQEEALEVADRIVVMNRGRIEQIGTPDEVYEKPANPFVYEFLGHVNLFHGRVHQGHAWIGDLEVDAPEYSEAEDLSAIAYVRPHDIEVDRTLNGEPALAAHIVHILAIGPVVRLELAGKDNQSTNSIYAEISKERFRELQLARGDQVFIKPRKLDLFPNHAQNGSIH</sequence>
<gene>
    <name evidence="1" type="primary">cysA</name>
    <name type="ordered locus">NE0576</name>
</gene>
<organism>
    <name type="scientific">Nitrosomonas europaea (strain ATCC 19718 / CIP 103999 / KCTC 2705 / NBRC 14298)</name>
    <dbReference type="NCBI Taxonomy" id="228410"/>
    <lineage>
        <taxon>Bacteria</taxon>
        <taxon>Pseudomonadati</taxon>
        <taxon>Pseudomonadota</taxon>
        <taxon>Betaproteobacteria</taxon>
        <taxon>Nitrosomonadales</taxon>
        <taxon>Nitrosomonadaceae</taxon>
        <taxon>Nitrosomonas</taxon>
    </lineage>
</organism>
<keyword id="KW-0067">ATP-binding</keyword>
<keyword id="KW-0997">Cell inner membrane</keyword>
<keyword id="KW-1003">Cell membrane</keyword>
<keyword id="KW-0472">Membrane</keyword>
<keyword id="KW-0547">Nucleotide-binding</keyword>
<keyword id="KW-1185">Reference proteome</keyword>
<keyword id="KW-0764">Sulfate transport</keyword>
<keyword id="KW-1278">Translocase</keyword>
<keyword id="KW-0813">Transport</keyword>
<accession>Q82WT5</accession>
<comment type="function">
    <text evidence="1">Part of the ABC transporter complex CysAWTP involved in sulfate/thiosulfate import. Responsible for energy coupling to the transport system.</text>
</comment>
<comment type="catalytic activity">
    <reaction evidence="1">
        <text>sulfate(out) + ATP + H2O = sulfate(in) + ADP + phosphate + H(+)</text>
        <dbReference type="Rhea" id="RHEA:10192"/>
        <dbReference type="ChEBI" id="CHEBI:15377"/>
        <dbReference type="ChEBI" id="CHEBI:15378"/>
        <dbReference type="ChEBI" id="CHEBI:16189"/>
        <dbReference type="ChEBI" id="CHEBI:30616"/>
        <dbReference type="ChEBI" id="CHEBI:43474"/>
        <dbReference type="ChEBI" id="CHEBI:456216"/>
        <dbReference type="EC" id="7.3.2.3"/>
    </reaction>
</comment>
<comment type="catalytic activity">
    <reaction evidence="1">
        <text>thiosulfate(out) + ATP + H2O = thiosulfate(in) + ADP + phosphate + H(+)</text>
        <dbReference type="Rhea" id="RHEA:29871"/>
        <dbReference type="ChEBI" id="CHEBI:15377"/>
        <dbReference type="ChEBI" id="CHEBI:15378"/>
        <dbReference type="ChEBI" id="CHEBI:30616"/>
        <dbReference type="ChEBI" id="CHEBI:33542"/>
        <dbReference type="ChEBI" id="CHEBI:43474"/>
        <dbReference type="ChEBI" id="CHEBI:456216"/>
        <dbReference type="EC" id="7.3.2.3"/>
    </reaction>
</comment>
<comment type="subunit">
    <text evidence="1">The complex is composed of two ATP-binding proteins (CysA), two transmembrane proteins (CysT and CysW) and a solute-binding protein (CysP).</text>
</comment>
<comment type="subcellular location">
    <subcellularLocation>
        <location evidence="1">Cell inner membrane</location>
        <topology evidence="1">Peripheral membrane protein</topology>
    </subcellularLocation>
</comment>
<comment type="similarity">
    <text evidence="1">Belongs to the ABC transporter superfamily. Sulfate/tungstate importer (TC 3.A.1.6) family.</text>
</comment>
<dbReference type="EC" id="7.3.2.3" evidence="1"/>
<dbReference type="EMBL" id="AL954747">
    <property type="protein sequence ID" value="CAD84487.1"/>
    <property type="molecule type" value="Genomic_DNA"/>
</dbReference>
<dbReference type="RefSeq" id="WP_011111202.1">
    <property type="nucleotide sequence ID" value="NC_004757.1"/>
</dbReference>
<dbReference type="SMR" id="Q82WT5"/>
<dbReference type="STRING" id="228410.NE0576"/>
<dbReference type="GeneID" id="87103776"/>
<dbReference type="KEGG" id="neu:NE0576"/>
<dbReference type="eggNOG" id="COG1118">
    <property type="taxonomic scope" value="Bacteria"/>
</dbReference>
<dbReference type="HOGENOM" id="CLU_000604_1_1_4"/>
<dbReference type="OrthoDB" id="5298774at2"/>
<dbReference type="PhylomeDB" id="Q82WT5"/>
<dbReference type="Proteomes" id="UP000001416">
    <property type="component" value="Chromosome"/>
</dbReference>
<dbReference type="GO" id="GO:0043190">
    <property type="term" value="C:ATP-binding cassette (ABC) transporter complex"/>
    <property type="evidence" value="ECO:0007669"/>
    <property type="project" value="InterPro"/>
</dbReference>
<dbReference type="GO" id="GO:0015419">
    <property type="term" value="F:ABC-type sulfate transporter activity"/>
    <property type="evidence" value="ECO:0007669"/>
    <property type="project" value="InterPro"/>
</dbReference>
<dbReference type="GO" id="GO:0102025">
    <property type="term" value="F:ABC-type thiosulfate transporter activity"/>
    <property type="evidence" value="ECO:0007669"/>
    <property type="project" value="RHEA"/>
</dbReference>
<dbReference type="GO" id="GO:0005524">
    <property type="term" value="F:ATP binding"/>
    <property type="evidence" value="ECO:0007669"/>
    <property type="project" value="UniProtKB-KW"/>
</dbReference>
<dbReference type="GO" id="GO:0016887">
    <property type="term" value="F:ATP hydrolysis activity"/>
    <property type="evidence" value="ECO:0007669"/>
    <property type="project" value="InterPro"/>
</dbReference>
<dbReference type="CDD" id="cd03296">
    <property type="entry name" value="ABC_CysA_sulfate_importer"/>
    <property type="match status" value="1"/>
</dbReference>
<dbReference type="FunFam" id="3.40.50.300:FF:000227">
    <property type="entry name" value="Sulfate/thiosulfate import ATP-binding protein CysA"/>
    <property type="match status" value="1"/>
</dbReference>
<dbReference type="Gene3D" id="3.40.50.300">
    <property type="entry name" value="P-loop containing nucleotide triphosphate hydrolases"/>
    <property type="match status" value="1"/>
</dbReference>
<dbReference type="InterPro" id="IPR003593">
    <property type="entry name" value="AAA+_ATPase"/>
</dbReference>
<dbReference type="InterPro" id="IPR050093">
    <property type="entry name" value="ABC_SmlMolc_Importer"/>
</dbReference>
<dbReference type="InterPro" id="IPR003439">
    <property type="entry name" value="ABC_transporter-like_ATP-bd"/>
</dbReference>
<dbReference type="InterPro" id="IPR017871">
    <property type="entry name" value="ABC_transporter-like_CS"/>
</dbReference>
<dbReference type="InterPro" id="IPR041193">
    <property type="entry name" value="CysA_C"/>
</dbReference>
<dbReference type="InterPro" id="IPR008995">
    <property type="entry name" value="Mo/tungstate-bd_C_term_dom"/>
</dbReference>
<dbReference type="InterPro" id="IPR027417">
    <property type="entry name" value="P-loop_NTPase"/>
</dbReference>
<dbReference type="InterPro" id="IPR005666">
    <property type="entry name" value="Sulph_transpt1"/>
</dbReference>
<dbReference type="InterPro" id="IPR024765">
    <property type="entry name" value="TOBE-like"/>
</dbReference>
<dbReference type="NCBIfam" id="TIGR00968">
    <property type="entry name" value="3a0106s01"/>
    <property type="match status" value="1"/>
</dbReference>
<dbReference type="PANTHER" id="PTHR42781">
    <property type="entry name" value="SPERMIDINE/PUTRESCINE IMPORT ATP-BINDING PROTEIN POTA"/>
    <property type="match status" value="1"/>
</dbReference>
<dbReference type="PANTHER" id="PTHR42781:SF4">
    <property type="entry name" value="SPERMIDINE_PUTRESCINE IMPORT ATP-BINDING PROTEIN POTA"/>
    <property type="match status" value="1"/>
</dbReference>
<dbReference type="Pfam" id="PF00005">
    <property type="entry name" value="ABC_tran"/>
    <property type="match status" value="1"/>
</dbReference>
<dbReference type="Pfam" id="PF17850">
    <property type="entry name" value="CysA_C_terminal"/>
    <property type="match status" value="1"/>
</dbReference>
<dbReference type="Pfam" id="PF12857">
    <property type="entry name" value="TOBE_3"/>
    <property type="match status" value="1"/>
</dbReference>
<dbReference type="SMART" id="SM00382">
    <property type="entry name" value="AAA"/>
    <property type="match status" value="1"/>
</dbReference>
<dbReference type="SUPFAM" id="SSF50331">
    <property type="entry name" value="MOP-like"/>
    <property type="match status" value="1"/>
</dbReference>
<dbReference type="SUPFAM" id="SSF52540">
    <property type="entry name" value="P-loop containing nucleoside triphosphate hydrolases"/>
    <property type="match status" value="1"/>
</dbReference>
<dbReference type="PROSITE" id="PS00211">
    <property type="entry name" value="ABC_TRANSPORTER_1"/>
    <property type="match status" value="1"/>
</dbReference>
<dbReference type="PROSITE" id="PS50893">
    <property type="entry name" value="ABC_TRANSPORTER_2"/>
    <property type="match status" value="1"/>
</dbReference>
<dbReference type="PROSITE" id="PS51237">
    <property type="entry name" value="CYSA"/>
    <property type="match status" value="1"/>
</dbReference>
<protein>
    <recommendedName>
        <fullName evidence="1">Sulfate/thiosulfate import ATP-binding protein CysA</fullName>
        <ecNumber evidence="1">7.3.2.3</ecNumber>
    </recommendedName>
    <alternativeName>
        <fullName evidence="1">Sulfate-transporting ATPase</fullName>
    </alternativeName>
</protein>
<evidence type="ECO:0000255" key="1">
    <source>
        <dbReference type="HAMAP-Rule" id="MF_01701"/>
    </source>
</evidence>